<organism>
    <name type="scientific">Parasynechococcus marenigrum (strain WH8102)</name>
    <dbReference type="NCBI Taxonomy" id="84588"/>
    <lineage>
        <taxon>Bacteria</taxon>
        <taxon>Bacillati</taxon>
        <taxon>Cyanobacteriota</taxon>
        <taxon>Cyanophyceae</taxon>
        <taxon>Synechococcales</taxon>
        <taxon>Prochlorococcaceae</taxon>
        <taxon>Parasynechococcus</taxon>
        <taxon>Parasynechococcus marenigrum</taxon>
    </lineage>
</organism>
<name>FUMC_PARMW</name>
<gene>
    <name evidence="1" type="primary">fumC</name>
    <name type="ordered locus">SYNW0637</name>
</gene>
<sequence>MGQPMRQEHDSIGGVDVPAAALWGAQTQRSLNNFAIGHQKIPAELIHALARIKQCCAAVNGRHGLLNDQQVALIERAGQAIQTGQQDDHFPLSVWQTGSGTQTNMNVNEVISNLAAQESGENLGSHRPLHPNDHINRSQSTNDVFPAAIHVAAALQLQQELLPELKRLIASLDAKAVAWQDIIKIGRTHLQDAVPLRLGDEVSAWRDRLSDGAHWLTTAHQDLLALPLGGTAVGSGLNTPDRFAHEVCAELASRTGSDFQPADNLFAVMAGHDSLVQTMAQLRRLAVTLLTIANDIRLLACGPRAGLGELLLPANEPGSSIMPGKVNPTQCEAMAMVCTQVIGMDAAVAAAGAGGHLQMNVYKPLIGYNLIEGIRLLQDACRCFRLNLLTGMEADRDRIAFYVERSLMLVTALTPEIGYEKACAIAQHAHRDGLTLREAAMQSGAITDERFDQLIDPAAMASPHR</sequence>
<comment type="function">
    <text evidence="1">Involved in the TCA cycle. Catalyzes the stereospecific interconversion of fumarate to L-malate.</text>
</comment>
<comment type="catalytic activity">
    <reaction evidence="1">
        <text>(S)-malate = fumarate + H2O</text>
        <dbReference type="Rhea" id="RHEA:12460"/>
        <dbReference type="ChEBI" id="CHEBI:15377"/>
        <dbReference type="ChEBI" id="CHEBI:15589"/>
        <dbReference type="ChEBI" id="CHEBI:29806"/>
        <dbReference type="EC" id="4.2.1.2"/>
    </reaction>
</comment>
<comment type="pathway">
    <text evidence="1">Carbohydrate metabolism; tricarboxylic acid cycle; (S)-malate from fumarate: step 1/1.</text>
</comment>
<comment type="subunit">
    <text evidence="1">Homotetramer.</text>
</comment>
<comment type="subcellular location">
    <subcellularLocation>
        <location evidence="1">Cytoplasm</location>
    </subcellularLocation>
</comment>
<comment type="miscellaneous">
    <text evidence="1">There are 2 substrate-binding sites: the catalytic A site, and the non-catalytic B site that may play a role in the transfer of substrate or product between the active site and the solvent. Alternatively, the B site may bind allosteric effectors.</text>
</comment>
<comment type="similarity">
    <text evidence="1">Belongs to the class-II fumarase/aspartase family. Fumarase subfamily.</text>
</comment>
<comment type="sequence caution" evidence="2">
    <conflict type="erroneous initiation">
        <sequence resource="EMBL-CDS" id="CAE07152"/>
    </conflict>
    <text>Extended N-terminus.</text>
</comment>
<accession>Q7U8I1</accession>
<protein>
    <recommendedName>
        <fullName evidence="1">Fumarate hydratase class II</fullName>
        <shortName evidence="1">Fumarase C</shortName>
        <ecNumber evidence="1">4.2.1.2</ecNumber>
    </recommendedName>
    <alternativeName>
        <fullName evidence="1">Aerobic fumarase</fullName>
    </alternativeName>
    <alternativeName>
        <fullName evidence="1">Iron-independent fumarase</fullName>
    </alternativeName>
</protein>
<feature type="chain" id="PRO_0000161324" description="Fumarate hydratase class II">
    <location>
        <begin position="1"/>
        <end position="465"/>
    </location>
</feature>
<feature type="active site" description="Proton donor/acceptor" evidence="1">
    <location>
        <position position="189"/>
    </location>
</feature>
<feature type="active site" evidence="1">
    <location>
        <position position="319"/>
    </location>
</feature>
<feature type="binding site" evidence="1">
    <location>
        <begin position="99"/>
        <end position="101"/>
    </location>
    <ligand>
        <name>substrate</name>
    </ligand>
</feature>
<feature type="binding site" evidence="1">
    <location>
        <position position="127"/>
    </location>
    <ligand>
        <name>substrate</name>
    </ligand>
</feature>
<feature type="binding site" description="in site B" evidence="1">
    <location>
        <begin position="130"/>
        <end position="133"/>
    </location>
    <ligand>
        <name>substrate</name>
    </ligand>
</feature>
<feature type="binding site" evidence="1">
    <location>
        <begin position="140"/>
        <end position="142"/>
    </location>
    <ligand>
        <name>substrate</name>
    </ligand>
</feature>
<feature type="binding site" evidence="1">
    <location>
        <position position="188"/>
    </location>
    <ligand>
        <name>substrate</name>
    </ligand>
</feature>
<feature type="binding site" evidence="1">
    <location>
        <position position="320"/>
    </location>
    <ligand>
        <name>substrate</name>
    </ligand>
</feature>
<feature type="binding site" evidence="1">
    <location>
        <begin position="325"/>
        <end position="327"/>
    </location>
    <ligand>
        <name>substrate</name>
    </ligand>
</feature>
<feature type="site" description="Important for catalytic activity" evidence="1">
    <location>
        <position position="332"/>
    </location>
</feature>
<reference key="1">
    <citation type="journal article" date="2003" name="Nature">
        <title>The genome of a motile marine Synechococcus.</title>
        <authorList>
            <person name="Palenik B."/>
            <person name="Brahamsha B."/>
            <person name="Larimer F.W."/>
            <person name="Land M.L."/>
            <person name="Hauser L."/>
            <person name="Chain P."/>
            <person name="Lamerdin J.E."/>
            <person name="Regala W."/>
            <person name="Allen E.E."/>
            <person name="McCarren J."/>
            <person name="Paulsen I.T."/>
            <person name="Dufresne A."/>
            <person name="Partensky F."/>
            <person name="Webb E.A."/>
            <person name="Waterbury J."/>
        </authorList>
    </citation>
    <scope>NUCLEOTIDE SEQUENCE [LARGE SCALE GENOMIC DNA]</scope>
    <source>
        <strain>WH8102</strain>
    </source>
</reference>
<proteinExistence type="inferred from homology"/>
<evidence type="ECO:0000255" key="1">
    <source>
        <dbReference type="HAMAP-Rule" id="MF_00743"/>
    </source>
</evidence>
<evidence type="ECO:0000305" key="2"/>
<dbReference type="EC" id="4.2.1.2" evidence="1"/>
<dbReference type="EMBL" id="BX569690">
    <property type="protein sequence ID" value="CAE07152.1"/>
    <property type="status" value="ALT_INIT"/>
    <property type="molecule type" value="Genomic_DNA"/>
</dbReference>
<dbReference type="RefSeq" id="WP_042504173.1">
    <property type="nucleotide sequence ID" value="NC_005070.1"/>
</dbReference>
<dbReference type="SMR" id="Q7U8I1"/>
<dbReference type="STRING" id="84588.SYNW0637"/>
<dbReference type="KEGG" id="syw:SYNW0637"/>
<dbReference type="eggNOG" id="COG0114">
    <property type="taxonomic scope" value="Bacteria"/>
</dbReference>
<dbReference type="HOGENOM" id="CLU_021594_4_1_3"/>
<dbReference type="UniPathway" id="UPA00223">
    <property type="reaction ID" value="UER01007"/>
</dbReference>
<dbReference type="Proteomes" id="UP000001422">
    <property type="component" value="Chromosome"/>
</dbReference>
<dbReference type="GO" id="GO:0005737">
    <property type="term" value="C:cytoplasm"/>
    <property type="evidence" value="ECO:0007669"/>
    <property type="project" value="UniProtKB-SubCell"/>
</dbReference>
<dbReference type="GO" id="GO:0004333">
    <property type="term" value="F:fumarate hydratase activity"/>
    <property type="evidence" value="ECO:0007669"/>
    <property type="project" value="UniProtKB-UniRule"/>
</dbReference>
<dbReference type="GO" id="GO:0006106">
    <property type="term" value="P:fumarate metabolic process"/>
    <property type="evidence" value="ECO:0007669"/>
    <property type="project" value="InterPro"/>
</dbReference>
<dbReference type="GO" id="GO:0006108">
    <property type="term" value="P:malate metabolic process"/>
    <property type="evidence" value="ECO:0007669"/>
    <property type="project" value="TreeGrafter"/>
</dbReference>
<dbReference type="GO" id="GO:0006099">
    <property type="term" value="P:tricarboxylic acid cycle"/>
    <property type="evidence" value="ECO:0007669"/>
    <property type="project" value="UniProtKB-UniRule"/>
</dbReference>
<dbReference type="CDD" id="cd01362">
    <property type="entry name" value="Fumarase_classII"/>
    <property type="match status" value="1"/>
</dbReference>
<dbReference type="FunFam" id="1.10.40.30:FF:000002">
    <property type="entry name" value="Fumarate hydratase class II"/>
    <property type="match status" value="1"/>
</dbReference>
<dbReference type="FunFam" id="1.10.275.10:FF:000001">
    <property type="entry name" value="Fumarate hydratase, mitochondrial"/>
    <property type="match status" value="1"/>
</dbReference>
<dbReference type="FunFam" id="1.20.200.10:FF:000001">
    <property type="entry name" value="Fumarate hydratase, mitochondrial"/>
    <property type="match status" value="1"/>
</dbReference>
<dbReference type="Gene3D" id="1.10.40.30">
    <property type="entry name" value="Fumarase/aspartase (C-terminal domain)"/>
    <property type="match status" value="1"/>
</dbReference>
<dbReference type="Gene3D" id="1.20.200.10">
    <property type="entry name" value="Fumarase/aspartase (Central domain)"/>
    <property type="match status" value="1"/>
</dbReference>
<dbReference type="Gene3D" id="1.10.275.10">
    <property type="entry name" value="Fumarase/aspartase (N-terminal domain)"/>
    <property type="match status" value="1"/>
</dbReference>
<dbReference type="HAMAP" id="MF_00743">
    <property type="entry name" value="FumaraseC"/>
    <property type="match status" value="1"/>
</dbReference>
<dbReference type="InterPro" id="IPR005677">
    <property type="entry name" value="Fum_hydII"/>
</dbReference>
<dbReference type="InterPro" id="IPR024083">
    <property type="entry name" value="Fumarase/histidase_N"/>
</dbReference>
<dbReference type="InterPro" id="IPR018951">
    <property type="entry name" value="Fumarase_C_C"/>
</dbReference>
<dbReference type="InterPro" id="IPR020557">
    <property type="entry name" value="Fumarate_lyase_CS"/>
</dbReference>
<dbReference type="InterPro" id="IPR000362">
    <property type="entry name" value="Fumarate_lyase_fam"/>
</dbReference>
<dbReference type="InterPro" id="IPR022761">
    <property type="entry name" value="Fumarate_lyase_N"/>
</dbReference>
<dbReference type="InterPro" id="IPR008948">
    <property type="entry name" value="L-Aspartase-like"/>
</dbReference>
<dbReference type="PANTHER" id="PTHR11444">
    <property type="entry name" value="ASPARTATEAMMONIA/ARGININOSUCCINATE/ADENYLOSUCCINATE LYASE"/>
    <property type="match status" value="1"/>
</dbReference>
<dbReference type="PANTHER" id="PTHR11444:SF1">
    <property type="entry name" value="FUMARATE HYDRATASE, MITOCHONDRIAL"/>
    <property type="match status" value="1"/>
</dbReference>
<dbReference type="Pfam" id="PF10415">
    <property type="entry name" value="FumaraseC_C"/>
    <property type="match status" value="1"/>
</dbReference>
<dbReference type="Pfam" id="PF00206">
    <property type="entry name" value="Lyase_1"/>
    <property type="match status" value="1"/>
</dbReference>
<dbReference type="PRINTS" id="PR00145">
    <property type="entry name" value="ARGSUCLYASE"/>
</dbReference>
<dbReference type="PRINTS" id="PR00149">
    <property type="entry name" value="FUMRATELYASE"/>
</dbReference>
<dbReference type="SUPFAM" id="SSF48557">
    <property type="entry name" value="L-aspartase-like"/>
    <property type="match status" value="1"/>
</dbReference>
<dbReference type="PROSITE" id="PS00163">
    <property type="entry name" value="FUMARATE_LYASES"/>
    <property type="match status" value="1"/>
</dbReference>
<keyword id="KW-0963">Cytoplasm</keyword>
<keyword id="KW-0456">Lyase</keyword>
<keyword id="KW-0816">Tricarboxylic acid cycle</keyword>